<sequence>MHPAHLLVLLGVCVSLLGASDIPPLPLNLVQFSYLIRCANKYKRPGWHYANYGCYCGSGGRGTPVDDVDRCCQAHDKCYEDAEKLGCYPKWTTYYYYCGANGPYCKTRTKCQRFVCNCDVVAADCFASYPYNRRYWFYSNKKRCR</sequence>
<keyword id="KW-0106">Calcium</keyword>
<keyword id="KW-0903">Direct protein sequencing</keyword>
<keyword id="KW-1015">Disulfide bond</keyword>
<keyword id="KW-0378">Hydrolase</keyword>
<keyword id="KW-0442">Lipid degradation</keyword>
<keyword id="KW-0443">Lipid metabolism</keyword>
<keyword id="KW-0479">Metal-binding</keyword>
<keyword id="KW-0528">Neurotoxin</keyword>
<keyword id="KW-0638">Presynaptic neurotoxin</keyword>
<keyword id="KW-1185">Reference proteome</keyword>
<keyword id="KW-0964">Secreted</keyword>
<keyword id="KW-0732">Signal</keyword>
<keyword id="KW-0800">Toxin</keyword>
<evidence type="ECO:0000250" key="1"/>
<evidence type="ECO:0000255" key="2"/>
<evidence type="ECO:0000255" key="3">
    <source>
        <dbReference type="PROSITE-ProRule" id="PRU10035"/>
    </source>
</evidence>
<evidence type="ECO:0000255" key="4">
    <source>
        <dbReference type="PROSITE-ProRule" id="PRU10036"/>
    </source>
</evidence>
<evidence type="ECO:0000269" key="5">
    <source>
    </source>
</evidence>
<evidence type="ECO:0000269" key="6">
    <source>
    </source>
</evidence>
<evidence type="ECO:0000269" key="7">
    <source>
    </source>
</evidence>
<evidence type="ECO:0000305" key="8"/>
<reference key="1">
    <citation type="submission" date="2008-02" db="EMBL/GenBank/DDBJ databases">
        <title>Identification of the subunits of textilotoxin from the common brown snake, Pseudonaja textilis.</title>
        <authorList>
            <person name="St Pierre L."/>
        </authorList>
    </citation>
    <scope>NUCLEOTIDE SEQUENCE [MRNA]</scope>
</reference>
<reference key="2">
    <citation type="journal article" date="1993" name="Biochim. Biophys. Acta">
        <title>Studies on the subunit structure of textilotoxin, a potent presynaptic neurotoxin from the venom of the Australian common brown snake (Pseudonaja textilis). 3. The complete amino-acid sequences of all the subunits.</title>
        <authorList>
            <person name="Pearson J.A."/>
            <person name="Tyler M.I."/>
            <person name="Retson K.V."/>
            <person name="Howden M.E.H."/>
        </authorList>
    </citation>
    <scope>PROTEIN SEQUENCE OF 28-145</scope>
    <scope>FUNCTION</scope>
    <scope>TOXIC DOSE</scope>
    <source>
        <tissue>Venom</tissue>
    </source>
</reference>
<reference key="3">
    <citation type="journal article" date="1987" name="Biochim. Biophys. Acta">
        <title>Studies on the subunit structure of textilotoxin, a potent neurotoxin from the venom of the Australian common brown snake (Pseudonaja textilis).</title>
        <authorList>
            <person name="Tyler M.I."/>
            <person name="Barnett D."/>
            <person name="Nicholson P."/>
            <person name="Spence I."/>
            <person name="Howden M.E.H."/>
        </authorList>
    </citation>
    <scope>PROTEIN SEQUENCE OF 28-145</scope>
    <source>
        <tissue>Venom</tissue>
    </source>
</reference>
<reference key="4">
    <citation type="journal article" date="2006" name="Mol. Cell. Proteomics">
        <title>Molecular diversity in venom from the Australian Brown snake, Pseudonaja textilis.</title>
        <authorList>
            <person name="Birrell G.W."/>
            <person name="Earl S."/>
            <person name="Masci P.P."/>
            <person name="de Jersey J."/>
            <person name="Wallis T.P."/>
            <person name="Gorman J.J."/>
            <person name="Lavin M.F."/>
        </authorList>
    </citation>
    <scope>IDENTIFICATION BY MASS SPECTROMETRY</scope>
    <source>
        <tissue>Venom</tissue>
    </source>
</reference>
<reference key="5">
    <citation type="journal article" date="2009" name="Proteins">
        <title>The major toxin from the Australian common brown snake is a hexamer with unusual gas-phase dissociation properties.</title>
        <authorList>
            <person name="Aquilina J.A."/>
        </authorList>
    </citation>
    <scope>SUBUNIT</scope>
    <scope>IDENTIFICATION BY MASS SPECTROMETRY</scope>
    <source>
        <tissue>Venom</tissue>
    </source>
</reference>
<name>PA2BA_PSETE</name>
<protein>
    <recommendedName>
        <fullName>Basic phospholipase A2 textilotoxin A chain</fullName>
        <shortName>svPLA2</shortName>
        <ecNumber>3.1.1.4</ecNumber>
    </recommendedName>
    <alternativeName>
        <fullName>Phosphatidylcholine 2-acylhydrolase</fullName>
    </alternativeName>
</protein>
<feature type="signal peptide" evidence="2">
    <location>
        <begin position="1"/>
        <end position="19"/>
    </location>
</feature>
<feature type="propeptide" id="PRO_0000420145" evidence="6 7">
    <location>
        <begin position="20"/>
        <end position="27"/>
    </location>
</feature>
<feature type="chain" id="PRO_0000161694" description="Basic phospholipase A2 textilotoxin A chain">
    <location>
        <begin position="28"/>
        <end position="145"/>
    </location>
</feature>
<feature type="active site" evidence="1">
    <location>
        <position position="75"/>
    </location>
</feature>
<feature type="active site" evidence="1">
    <location>
        <position position="119"/>
    </location>
</feature>
<feature type="binding site" evidence="1">
    <location>
        <position position="55"/>
    </location>
    <ligand>
        <name>Ca(2+)</name>
        <dbReference type="ChEBI" id="CHEBI:29108"/>
    </ligand>
</feature>
<feature type="binding site" evidence="1">
    <location>
        <position position="57"/>
    </location>
    <ligand>
        <name>Ca(2+)</name>
        <dbReference type="ChEBI" id="CHEBI:29108"/>
    </ligand>
</feature>
<feature type="binding site" evidence="1">
    <location>
        <position position="59"/>
    </location>
    <ligand>
        <name>Ca(2+)</name>
        <dbReference type="ChEBI" id="CHEBI:29108"/>
    </ligand>
</feature>
<feature type="binding site" evidence="1">
    <location>
        <position position="76"/>
    </location>
    <ligand>
        <name>Ca(2+)</name>
        <dbReference type="ChEBI" id="CHEBI:29108"/>
    </ligand>
</feature>
<feature type="disulfide bond" evidence="1">
    <location>
        <begin position="38"/>
        <end position="98"/>
    </location>
</feature>
<feature type="disulfide bond" evidence="1">
    <location>
        <begin position="54"/>
        <end position="144"/>
    </location>
</feature>
<feature type="disulfide bond" evidence="1">
    <location>
        <begin position="56"/>
        <end position="72"/>
    </location>
</feature>
<feature type="disulfide bond" evidence="1">
    <location>
        <begin position="71"/>
        <end position="125"/>
    </location>
</feature>
<feature type="disulfide bond" evidence="1">
    <location>
        <begin position="78"/>
        <end position="118"/>
    </location>
</feature>
<feature type="disulfide bond" evidence="1">
    <location>
        <begin position="87"/>
        <end position="111"/>
    </location>
</feature>
<feature type="disulfide bond" evidence="1">
    <location>
        <begin position="105"/>
        <end position="116"/>
    </location>
</feature>
<feature type="sequence conflict" description="In Ref. 2; AA sequence and 3; AA sequence." evidence="8" ref="2 3">
    <original>Y</original>
    <variation>N</variation>
    <location>
        <position position="95"/>
    </location>
</feature>
<feature type="sequence conflict" description="In Ref. 2; AA sequence and 3; AA sequence." evidence="8" ref="2 3">
    <original>R</original>
    <variation>Q</variation>
    <location>
        <position position="145"/>
    </location>
</feature>
<organism>
    <name type="scientific">Pseudonaja textilis</name>
    <name type="common">Eastern brown snake</name>
    <dbReference type="NCBI Taxonomy" id="8673"/>
    <lineage>
        <taxon>Eukaryota</taxon>
        <taxon>Metazoa</taxon>
        <taxon>Chordata</taxon>
        <taxon>Craniata</taxon>
        <taxon>Vertebrata</taxon>
        <taxon>Euteleostomi</taxon>
        <taxon>Lepidosauria</taxon>
        <taxon>Squamata</taxon>
        <taxon>Bifurcata</taxon>
        <taxon>Unidentata</taxon>
        <taxon>Episquamata</taxon>
        <taxon>Toxicofera</taxon>
        <taxon>Serpentes</taxon>
        <taxon>Colubroidea</taxon>
        <taxon>Elapidae</taxon>
        <taxon>Hydrophiinae</taxon>
        <taxon>Pseudonaja</taxon>
    </lineage>
</organism>
<comment type="function">
    <text evidence="7">Snake venom oligomeric phospholipase A2 that has potent presynaptic neurotoxicity. Chain A possesses a very low toxicity, but is essential for neurotoxicity. Possesses a low enzymatic activity. PLA2 catalyzes the calcium-dependent hydrolysis of the 2-acyl groups in 3-sn-phosphoglycerides.</text>
</comment>
<comment type="catalytic activity">
    <reaction evidence="3 4">
        <text>a 1,2-diacyl-sn-glycero-3-phosphocholine + H2O = a 1-acyl-sn-glycero-3-phosphocholine + a fatty acid + H(+)</text>
        <dbReference type="Rhea" id="RHEA:15801"/>
        <dbReference type="ChEBI" id="CHEBI:15377"/>
        <dbReference type="ChEBI" id="CHEBI:15378"/>
        <dbReference type="ChEBI" id="CHEBI:28868"/>
        <dbReference type="ChEBI" id="CHEBI:57643"/>
        <dbReference type="ChEBI" id="CHEBI:58168"/>
        <dbReference type="EC" id="3.1.1.4"/>
    </reaction>
</comment>
<comment type="cofactor">
    <cofactor evidence="1">
        <name>Ca(2+)</name>
        <dbReference type="ChEBI" id="CHEBI:29108"/>
    </cofactor>
    <text evidence="1">Binds 1 Ca(2+) ion.</text>
</comment>
<comment type="subunit">
    <text evidence="5 7">Heterohexamer. 2 forms exist: 2 A or 2 B chains, 2 C chains and 2 covalently-linked D chains, and 1 A or 1 B, 1 C, 2 covalently-linked D chains and 2 differentially glycosylated covalently-linked D chains. Textilotoxin was originally described as pentameric (PubMed:8431471).</text>
</comment>
<comment type="subcellular location">
    <subcellularLocation>
        <location>Secreted</location>
    </subcellularLocation>
</comment>
<comment type="tissue specificity">
    <text>Expressed by the venom gland.</text>
</comment>
<comment type="toxic dose">
    <text evidence="7">Oligomer: LD(50) is 1 ug/kg by intraperitoneal injection into mice.</text>
</comment>
<comment type="toxic dose">
    <text evidence="7">Monomer: LD(50) is 4 mg/kg by intravenous injection into mice.</text>
</comment>
<comment type="similarity">
    <text evidence="8">Belongs to the phospholipase A2 family. Group I subfamily. D49 sub-subfamily.</text>
</comment>
<accession>P23026</accession>
<accession>C7S7C0</accession>
<dbReference type="EC" id="3.1.1.4"/>
<dbReference type="EMBL" id="EU523132">
    <property type="protein sequence ID" value="ACD36029.1"/>
    <property type="molecule type" value="mRNA"/>
</dbReference>
<dbReference type="PIR" id="S29651">
    <property type="entry name" value="S29651"/>
</dbReference>
<dbReference type="SMR" id="P23026"/>
<dbReference type="Proteomes" id="UP000472273">
    <property type="component" value="Unplaced"/>
</dbReference>
<dbReference type="GO" id="GO:0005576">
    <property type="term" value="C:extracellular region"/>
    <property type="evidence" value="ECO:0007669"/>
    <property type="project" value="UniProtKB-SubCell"/>
</dbReference>
<dbReference type="GO" id="GO:0005509">
    <property type="term" value="F:calcium ion binding"/>
    <property type="evidence" value="ECO:0007669"/>
    <property type="project" value="InterPro"/>
</dbReference>
<dbReference type="GO" id="GO:0047498">
    <property type="term" value="F:calcium-dependent phospholipase A2 activity"/>
    <property type="evidence" value="ECO:0007669"/>
    <property type="project" value="TreeGrafter"/>
</dbReference>
<dbReference type="GO" id="GO:0005543">
    <property type="term" value="F:phospholipid binding"/>
    <property type="evidence" value="ECO:0007669"/>
    <property type="project" value="TreeGrafter"/>
</dbReference>
<dbReference type="GO" id="GO:0090729">
    <property type="term" value="F:toxin activity"/>
    <property type="evidence" value="ECO:0007669"/>
    <property type="project" value="UniProtKB-KW"/>
</dbReference>
<dbReference type="GO" id="GO:0050482">
    <property type="term" value="P:arachidonate secretion"/>
    <property type="evidence" value="ECO:0007669"/>
    <property type="project" value="InterPro"/>
</dbReference>
<dbReference type="GO" id="GO:0016042">
    <property type="term" value="P:lipid catabolic process"/>
    <property type="evidence" value="ECO:0007669"/>
    <property type="project" value="UniProtKB-KW"/>
</dbReference>
<dbReference type="GO" id="GO:0006644">
    <property type="term" value="P:phospholipid metabolic process"/>
    <property type="evidence" value="ECO:0007669"/>
    <property type="project" value="InterPro"/>
</dbReference>
<dbReference type="CDD" id="cd00125">
    <property type="entry name" value="PLA2c"/>
    <property type="match status" value="1"/>
</dbReference>
<dbReference type="FunFam" id="1.20.90.10:FF:000007">
    <property type="entry name" value="Acidic phospholipase A2"/>
    <property type="match status" value="1"/>
</dbReference>
<dbReference type="Gene3D" id="1.20.90.10">
    <property type="entry name" value="Phospholipase A2 domain"/>
    <property type="match status" value="1"/>
</dbReference>
<dbReference type="InterPro" id="IPR001211">
    <property type="entry name" value="PLipase_A2"/>
</dbReference>
<dbReference type="InterPro" id="IPR033112">
    <property type="entry name" value="PLipase_A2_Asp_AS"/>
</dbReference>
<dbReference type="InterPro" id="IPR016090">
    <property type="entry name" value="PLipase_A2_dom"/>
</dbReference>
<dbReference type="InterPro" id="IPR036444">
    <property type="entry name" value="PLipase_A2_dom_sf"/>
</dbReference>
<dbReference type="InterPro" id="IPR033113">
    <property type="entry name" value="PLipase_A2_His_AS"/>
</dbReference>
<dbReference type="PANTHER" id="PTHR11716:SF51">
    <property type="entry name" value="PHOSPHOLIPASE A2"/>
    <property type="match status" value="1"/>
</dbReference>
<dbReference type="PANTHER" id="PTHR11716">
    <property type="entry name" value="PHOSPHOLIPASE A2 FAMILY MEMBER"/>
    <property type="match status" value="1"/>
</dbReference>
<dbReference type="Pfam" id="PF00068">
    <property type="entry name" value="Phospholip_A2_1"/>
    <property type="match status" value="1"/>
</dbReference>
<dbReference type="PRINTS" id="PR00389">
    <property type="entry name" value="PHPHLIPASEA2"/>
</dbReference>
<dbReference type="SMART" id="SM00085">
    <property type="entry name" value="PA2c"/>
    <property type="match status" value="1"/>
</dbReference>
<dbReference type="SUPFAM" id="SSF48619">
    <property type="entry name" value="Phospholipase A2, PLA2"/>
    <property type="match status" value="1"/>
</dbReference>
<dbReference type="PROSITE" id="PS00119">
    <property type="entry name" value="PA2_ASP"/>
    <property type="match status" value="1"/>
</dbReference>
<dbReference type="PROSITE" id="PS00118">
    <property type="entry name" value="PA2_HIS"/>
    <property type="match status" value="1"/>
</dbReference>
<proteinExistence type="evidence at protein level"/>